<reference key="1">
    <citation type="journal article" date="2010" name="ISME J.">
        <title>The complete genome sequence of the algal symbiont Dinoroseobacter shibae: a hitchhiker's guide to life in the sea.</title>
        <authorList>
            <person name="Wagner-Dobler I."/>
            <person name="Ballhausen B."/>
            <person name="Berger M."/>
            <person name="Brinkhoff T."/>
            <person name="Buchholz I."/>
            <person name="Bunk B."/>
            <person name="Cypionka H."/>
            <person name="Daniel R."/>
            <person name="Drepper T."/>
            <person name="Gerdts G."/>
            <person name="Hahnke S."/>
            <person name="Han C."/>
            <person name="Jahn D."/>
            <person name="Kalhoefer D."/>
            <person name="Kiss H."/>
            <person name="Klenk H.P."/>
            <person name="Kyrpides N."/>
            <person name="Liebl W."/>
            <person name="Liesegang H."/>
            <person name="Meincke L."/>
            <person name="Pati A."/>
            <person name="Petersen J."/>
            <person name="Piekarski T."/>
            <person name="Pommerenke C."/>
            <person name="Pradella S."/>
            <person name="Pukall R."/>
            <person name="Rabus R."/>
            <person name="Stackebrandt E."/>
            <person name="Thole S."/>
            <person name="Thompson L."/>
            <person name="Tielen P."/>
            <person name="Tomasch J."/>
            <person name="von Jan M."/>
            <person name="Wanphrut N."/>
            <person name="Wichels A."/>
            <person name="Zech H."/>
            <person name="Simon M."/>
        </authorList>
    </citation>
    <scope>NUCLEOTIDE SEQUENCE [LARGE SCALE GENOMIC DNA]</scope>
    <source>
        <strain>DSM 16493 / NCIMB 14021 / DFL 12</strain>
    </source>
</reference>
<proteinExistence type="inferred from homology"/>
<protein>
    <recommendedName>
        <fullName evidence="1">Malate dehydrogenase</fullName>
        <ecNumber evidence="1">1.1.1.37</ecNumber>
    </recommendedName>
</protein>
<keyword id="KW-0520">NAD</keyword>
<keyword id="KW-0560">Oxidoreductase</keyword>
<keyword id="KW-1185">Reference proteome</keyword>
<keyword id="KW-0816">Tricarboxylic acid cycle</keyword>
<dbReference type="EC" id="1.1.1.37" evidence="1"/>
<dbReference type="EMBL" id="CP000830">
    <property type="protein sequence ID" value="ABV94609.1"/>
    <property type="molecule type" value="Genomic_DNA"/>
</dbReference>
<dbReference type="RefSeq" id="WP_012179537.1">
    <property type="nucleotide sequence ID" value="NC_009952.1"/>
</dbReference>
<dbReference type="SMR" id="A8LJK6"/>
<dbReference type="STRING" id="398580.Dshi_2876"/>
<dbReference type="KEGG" id="dsh:Dshi_2876"/>
<dbReference type="eggNOG" id="COG0039">
    <property type="taxonomic scope" value="Bacteria"/>
</dbReference>
<dbReference type="HOGENOM" id="CLU_045401_2_1_5"/>
<dbReference type="OrthoDB" id="9802969at2"/>
<dbReference type="Proteomes" id="UP000006833">
    <property type="component" value="Chromosome"/>
</dbReference>
<dbReference type="GO" id="GO:0004459">
    <property type="term" value="F:L-lactate dehydrogenase activity"/>
    <property type="evidence" value="ECO:0007669"/>
    <property type="project" value="TreeGrafter"/>
</dbReference>
<dbReference type="GO" id="GO:0030060">
    <property type="term" value="F:L-malate dehydrogenase (NAD+) activity"/>
    <property type="evidence" value="ECO:0007669"/>
    <property type="project" value="UniProtKB-UniRule"/>
</dbReference>
<dbReference type="GO" id="GO:0006089">
    <property type="term" value="P:lactate metabolic process"/>
    <property type="evidence" value="ECO:0007669"/>
    <property type="project" value="TreeGrafter"/>
</dbReference>
<dbReference type="GO" id="GO:0006099">
    <property type="term" value="P:tricarboxylic acid cycle"/>
    <property type="evidence" value="ECO:0007669"/>
    <property type="project" value="UniProtKB-UniRule"/>
</dbReference>
<dbReference type="CDD" id="cd01339">
    <property type="entry name" value="LDH-like_MDH"/>
    <property type="match status" value="1"/>
</dbReference>
<dbReference type="FunFam" id="3.40.50.720:FF:000018">
    <property type="entry name" value="Malate dehydrogenase"/>
    <property type="match status" value="1"/>
</dbReference>
<dbReference type="FunFam" id="3.90.110.10:FF:000004">
    <property type="entry name" value="Malate dehydrogenase"/>
    <property type="match status" value="1"/>
</dbReference>
<dbReference type="Gene3D" id="3.90.110.10">
    <property type="entry name" value="Lactate dehydrogenase/glycoside hydrolase, family 4, C-terminal"/>
    <property type="match status" value="1"/>
</dbReference>
<dbReference type="Gene3D" id="3.40.50.720">
    <property type="entry name" value="NAD(P)-binding Rossmann-like Domain"/>
    <property type="match status" value="1"/>
</dbReference>
<dbReference type="HAMAP" id="MF_00487">
    <property type="entry name" value="Malate_dehydrog_3"/>
    <property type="match status" value="1"/>
</dbReference>
<dbReference type="InterPro" id="IPR001557">
    <property type="entry name" value="L-lactate/malate_DH"/>
</dbReference>
<dbReference type="InterPro" id="IPR022383">
    <property type="entry name" value="Lactate/malate_DH_C"/>
</dbReference>
<dbReference type="InterPro" id="IPR001236">
    <property type="entry name" value="Lactate/malate_DH_N"/>
</dbReference>
<dbReference type="InterPro" id="IPR015955">
    <property type="entry name" value="Lactate_DH/Glyco_Ohase_4_C"/>
</dbReference>
<dbReference type="InterPro" id="IPR011275">
    <property type="entry name" value="Malate_DH_type3"/>
</dbReference>
<dbReference type="InterPro" id="IPR036291">
    <property type="entry name" value="NAD(P)-bd_dom_sf"/>
</dbReference>
<dbReference type="NCBIfam" id="TIGR01763">
    <property type="entry name" value="MalateDH_bact"/>
    <property type="match status" value="1"/>
</dbReference>
<dbReference type="NCBIfam" id="NF004863">
    <property type="entry name" value="PRK06223.1"/>
    <property type="match status" value="1"/>
</dbReference>
<dbReference type="PANTHER" id="PTHR43128">
    <property type="entry name" value="L-2-HYDROXYCARBOXYLATE DEHYDROGENASE (NAD(P)(+))"/>
    <property type="match status" value="1"/>
</dbReference>
<dbReference type="PANTHER" id="PTHR43128:SF16">
    <property type="entry name" value="L-LACTATE DEHYDROGENASE"/>
    <property type="match status" value="1"/>
</dbReference>
<dbReference type="Pfam" id="PF02866">
    <property type="entry name" value="Ldh_1_C"/>
    <property type="match status" value="1"/>
</dbReference>
<dbReference type="Pfam" id="PF00056">
    <property type="entry name" value="Ldh_1_N"/>
    <property type="match status" value="1"/>
</dbReference>
<dbReference type="PIRSF" id="PIRSF000102">
    <property type="entry name" value="Lac_mal_DH"/>
    <property type="match status" value="1"/>
</dbReference>
<dbReference type="PRINTS" id="PR00086">
    <property type="entry name" value="LLDHDRGNASE"/>
</dbReference>
<dbReference type="SUPFAM" id="SSF56327">
    <property type="entry name" value="LDH C-terminal domain-like"/>
    <property type="match status" value="1"/>
</dbReference>
<dbReference type="SUPFAM" id="SSF51735">
    <property type="entry name" value="NAD(P)-binding Rossmann-fold domains"/>
    <property type="match status" value="1"/>
</dbReference>
<comment type="function">
    <text evidence="1">Catalyzes the reversible oxidation of malate to oxaloacetate.</text>
</comment>
<comment type="catalytic activity">
    <reaction evidence="1">
        <text>(S)-malate + NAD(+) = oxaloacetate + NADH + H(+)</text>
        <dbReference type="Rhea" id="RHEA:21432"/>
        <dbReference type="ChEBI" id="CHEBI:15378"/>
        <dbReference type="ChEBI" id="CHEBI:15589"/>
        <dbReference type="ChEBI" id="CHEBI:16452"/>
        <dbReference type="ChEBI" id="CHEBI:57540"/>
        <dbReference type="ChEBI" id="CHEBI:57945"/>
        <dbReference type="EC" id="1.1.1.37"/>
    </reaction>
</comment>
<comment type="similarity">
    <text evidence="1">Belongs to the LDH/MDH superfamily. MDH type 3 family.</text>
</comment>
<sequence>MARPKIALIGAGQIGGTLAHLVALKELGDVVLFDIADGTPQGKALDIAESGPVERFDASLKGTTDYADIAGADVCIVTAGVPRKPGMSRDDLLGINLKVMKSVGEGIAANAPDAFVICITNPLDAMVWALQQFSGLPKEKVVGMAGVLDSARFRHFLAEEFNVSMKDVTAFVLGGHGDTMVPLTRYSTVAGIPLPDLVEMGWTSQEKLDAIVQRTRDGGAEIVGLLKTGSAFYAPAASAVEMAEAYLKDQKRLLPCAAYCDGEFGLNDMYVGVPTIIGAGGIEKVVDIKLGKDEQAMFDNSVNAVKGLMEACKGIDDSLV</sequence>
<evidence type="ECO:0000255" key="1">
    <source>
        <dbReference type="HAMAP-Rule" id="MF_00487"/>
    </source>
</evidence>
<feature type="chain" id="PRO_1000081359" description="Malate dehydrogenase">
    <location>
        <begin position="1"/>
        <end position="320"/>
    </location>
</feature>
<feature type="active site" description="Proton acceptor" evidence="1">
    <location>
        <position position="176"/>
    </location>
</feature>
<feature type="binding site" evidence="1">
    <location>
        <begin position="10"/>
        <end position="15"/>
    </location>
    <ligand>
        <name>NAD(+)</name>
        <dbReference type="ChEBI" id="CHEBI:57540"/>
    </ligand>
</feature>
<feature type="binding site" evidence="1">
    <location>
        <position position="34"/>
    </location>
    <ligand>
        <name>NAD(+)</name>
        <dbReference type="ChEBI" id="CHEBI:57540"/>
    </ligand>
</feature>
<feature type="binding site" evidence="1">
    <location>
        <position position="83"/>
    </location>
    <ligand>
        <name>substrate</name>
    </ligand>
</feature>
<feature type="binding site" evidence="1">
    <location>
        <position position="89"/>
    </location>
    <ligand>
        <name>substrate</name>
    </ligand>
</feature>
<feature type="binding site" evidence="1">
    <location>
        <position position="96"/>
    </location>
    <ligand>
        <name>NAD(+)</name>
        <dbReference type="ChEBI" id="CHEBI:57540"/>
    </ligand>
</feature>
<feature type="binding site" evidence="1">
    <location>
        <begin position="119"/>
        <end position="121"/>
    </location>
    <ligand>
        <name>NAD(+)</name>
        <dbReference type="ChEBI" id="CHEBI:57540"/>
    </ligand>
</feature>
<feature type="binding site" evidence="1">
    <location>
        <position position="121"/>
    </location>
    <ligand>
        <name>substrate</name>
    </ligand>
</feature>
<feature type="binding site" evidence="1">
    <location>
        <position position="152"/>
    </location>
    <ligand>
        <name>substrate</name>
    </ligand>
</feature>
<gene>
    <name evidence="1" type="primary">mdh</name>
    <name type="ordered locus">Dshi_2876</name>
</gene>
<organism>
    <name type="scientific">Dinoroseobacter shibae (strain DSM 16493 / NCIMB 14021 / DFL 12)</name>
    <dbReference type="NCBI Taxonomy" id="398580"/>
    <lineage>
        <taxon>Bacteria</taxon>
        <taxon>Pseudomonadati</taxon>
        <taxon>Pseudomonadota</taxon>
        <taxon>Alphaproteobacteria</taxon>
        <taxon>Rhodobacterales</taxon>
        <taxon>Roseobacteraceae</taxon>
        <taxon>Dinoroseobacter</taxon>
    </lineage>
</organism>
<name>MDH_DINSH</name>
<accession>A8LJK6</accession>